<organism>
    <name type="scientific">Psychrobacter arcticus (strain DSM 17307 / VKM B-2377 / 273-4)</name>
    <dbReference type="NCBI Taxonomy" id="259536"/>
    <lineage>
        <taxon>Bacteria</taxon>
        <taxon>Pseudomonadati</taxon>
        <taxon>Pseudomonadota</taxon>
        <taxon>Gammaproteobacteria</taxon>
        <taxon>Moraxellales</taxon>
        <taxon>Moraxellaceae</taxon>
        <taxon>Psychrobacter</taxon>
    </lineage>
</organism>
<keyword id="KW-0066">ATP synthesis</keyword>
<keyword id="KW-0997">Cell inner membrane</keyword>
<keyword id="KW-1003">Cell membrane</keyword>
<keyword id="KW-0138">CF(0)</keyword>
<keyword id="KW-0375">Hydrogen ion transport</keyword>
<keyword id="KW-0406">Ion transport</keyword>
<keyword id="KW-0472">Membrane</keyword>
<keyword id="KW-1185">Reference proteome</keyword>
<keyword id="KW-0812">Transmembrane</keyword>
<keyword id="KW-1133">Transmembrane helix</keyword>
<keyword id="KW-0813">Transport</keyword>
<accession>Q4FQ31</accession>
<sequence>MAGEQTTTEYISHHLTNWTYGYLPGEGWKVAYTAEEASAMGFKAIHLDSMLWSIGLGIVFCAIFWMVARKVTSGVPGKLQAAVEMIIEFVDNNVRDSYSGTSKLIAPLALTIFVWIFLMNLMDLLPVDFVPGLAGQIGAMMGHDPHHVFFKIVPTTDPNITLGMSFSVFILILFYSIKEKGLGGFVGELTLHPFSAKNPIVQIILIPINFILEFVTLIAKPISLGLRLFGNMYAGELIFILIALMPFWIQWALSVPWAIFHILIITLQAFVFMMLTIVYMSLASSTEH</sequence>
<feature type="chain" id="PRO_0000362404" description="ATP synthase subunit a">
    <location>
        <begin position="1"/>
        <end position="288"/>
    </location>
</feature>
<feature type="transmembrane region" description="Helical" evidence="1">
    <location>
        <begin position="47"/>
        <end position="67"/>
    </location>
</feature>
<feature type="transmembrane region" description="Helical" evidence="1">
    <location>
        <begin position="104"/>
        <end position="124"/>
    </location>
</feature>
<feature type="transmembrane region" description="Helical" evidence="1">
    <location>
        <begin position="157"/>
        <end position="177"/>
    </location>
</feature>
<feature type="transmembrane region" description="Helical" evidence="1">
    <location>
        <begin position="199"/>
        <end position="219"/>
    </location>
</feature>
<feature type="transmembrane region" description="Helical" evidence="1">
    <location>
        <begin position="237"/>
        <end position="257"/>
    </location>
</feature>
<feature type="transmembrane region" description="Helical" evidence="1">
    <location>
        <begin position="258"/>
        <end position="278"/>
    </location>
</feature>
<name>ATP6_PSYA2</name>
<gene>
    <name evidence="1" type="primary">atpB</name>
    <name type="ordered locus">Psyc_2030</name>
</gene>
<comment type="function">
    <text evidence="1">Key component of the proton channel; it plays a direct role in the translocation of protons across the membrane.</text>
</comment>
<comment type="subunit">
    <text evidence="1">F-type ATPases have 2 components, CF(1) - the catalytic core - and CF(0) - the membrane proton channel. CF(1) has five subunits: alpha(3), beta(3), gamma(1), delta(1), epsilon(1). CF(0) has three main subunits: a(1), b(2) and c(9-12). The alpha and beta chains form an alternating ring which encloses part of the gamma chain. CF(1) is attached to CF(0) by a central stalk formed by the gamma and epsilon chains, while a peripheral stalk is formed by the delta and b chains.</text>
</comment>
<comment type="subcellular location">
    <subcellularLocation>
        <location evidence="1">Cell inner membrane</location>
        <topology evidence="1">Multi-pass membrane protein</topology>
    </subcellularLocation>
</comment>
<comment type="similarity">
    <text evidence="1">Belongs to the ATPase A chain family.</text>
</comment>
<evidence type="ECO:0000255" key="1">
    <source>
        <dbReference type="HAMAP-Rule" id="MF_01393"/>
    </source>
</evidence>
<protein>
    <recommendedName>
        <fullName evidence="1">ATP synthase subunit a</fullName>
    </recommendedName>
    <alternativeName>
        <fullName evidence="1">ATP synthase F0 sector subunit a</fullName>
    </alternativeName>
    <alternativeName>
        <fullName evidence="1">F-ATPase subunit 6</fullName>
    </alternativeName>
</protein>
<reference key="1">
    <citation type="journal article" date="2010" name="Appl. Environ. Microbiol.">
        <title>The genome sequence of Psychrobacter arcticus 273-4, a psychroactive Siberian permafrost bacterium, reveals mechanisms for adaptation to low-temperature growth.</title>
        <authorList>
            <person name="Ayala-del-Rio H.L."/>
            <person name="Chain P.S."/>
            <person name="Grzymski J.J."/>
            <person name="Ponder M.A."/>
            <person name="Ivanova N."/>
            <person name="Bergholz P.W."/>
            <person name="Di Bartolo G."/>
            <person name="Hauser L."/>
            <person name="Land M."/>
            <person name="Bakermans C."/>
            <person name="Rodrigues D."/>
            <person name="Klappenbach J."/>
            <person name="Zarka D."/>
            <person name="Larimer F."/>
            <person name="Richardson P."/>
            <person name="Murray A."/>
            <person name="Thomashow M."/>
            <person name="Tiedje J.M."/>
        </authorList>
    </citation>
    <scope>NUCLEOTIDE SEQUENCE [LARGE SCALE GENOMIC DNA]</scope>
    <source>
        <strain>DSM 17307 / VKM B-2377 / 273-4</strain>
    </source>
</reference>
<proteinExistence type="inferred from homology"/>
<dbReference type="EMBL" id="CP000082">
    <property type="protein sequence ID" value="AAZ19877.1"/>
    <property type="molecule type" value="Genomic_DNA"/>
</dbReference>
<dbReference type="RefSeq" id="WP_011281284.1">
    <property type="nucleotide sequence ID" value="NC_007204.1"/>
</dbReference>
<dbReference type="SMR" id="Q4FQ31"/>
<dbReference type="STRING" id="259536.Psyc_2030"/>
<dbReference type="KEGG" id="par:Psyc_2030"/>
<dbReference type="eggNOG" id="COG0356">
    <property type="taxonomic scope" value="Bacteria"/>
</dbReference>
<dbReference type="HOGENOM" id="CLU_041018_1_0_6"/>
<dbReference type="OrthoDB" id="9789241at2"/>
<dbReference type="Proteomes" id="UP000000546">
    <property type="component" value="Chromosome"/>
</dbReference>
<dbReference type="GO" id="GO:0005886">
    <property type="term" value="C:plasma membrane"/>
    <property type="evidence" value="ECO:0007669"/>
    <property type="project" value="UniProtKB-SubCell"/>
</dbReference>
<dbReference type="GO" id="GO:0045259">
    <property type="term" value="C:proton-transporting ATP synthase complex"/>
    <property type="evidence" value="ECO:0007669"/>
    <property type="project" value="UniProtKB-KW"/>
</dbReference>
<dbReference type="GO" id="GO:0046933">
    <property type="term" value="F:proton-transporting ATP synthase activity, rotational mechanism"/>
    <property type="evidence" value="ECO:0007669"/>
    <property type="project" value="UniProtKB-UniRule"/>
</dbReference>
<dbReference type="GO" id="GO:0042777">
    <property type="term" value="P:proton motive force-driven plasma membrane ATP synthesis"/>
    <property type="evidence" value="ECO:0007669"/>
    <property type="project" value="TreeGrafter"/>
</dbReference>
<dbReference type="CDD" id="cd00310">
    <property type="entry name" value="ATP-synt_Fo_a_6"/>
    <property type="match status" value="1"/>
</dbReference>
<dbReference type="FunFam" id="1.20.120.220:FF:000002">
    <property type="entry name" value="ATP synthase subunit a"/>
    <property type="match status" value="1"/>
</dbReference>
<dbReference type="Gene3D" id="1.20.120.220">
    <property type="entry name" value="ATP synthase, F0 complex, subunit A"/>
    <property type="match status" value="1"/>
</dbReference>
<dbReference type="HAMAP" id="MF_01393">
    <property type="entry name" value="ATP_synth_a_bact"/>
    <property type="match status" value="1"/>
</dbReference>
<dbReference type="InterPro" id="IPR045082">
    <property type="entry name" value="ATP_syn_F0_a_bact/chloroplast"/>
</dbReference>
<dbReference type="InterPro" id="IPR000568">
    <property type="entry name" value="ATP_synth_F0_asu"/>
</dbReference>
<dbReference type="InterPro" id="IPR023011">
    <property type="entry name" value="ATP_synth_F0_asu_AS"/>
</dbReference>
<dbReference type="InterPro" id="IPR035908">
    <property type="entry name" value="F0_ATP_A_sf"/>
</dbReference>
<dbReference type="NCBIfam" id="TIGR01131">
    <property type="entry name" value="ATP_synt_6_or_A"/>
    <property type="match status" value="1"/>
</dbReference>
<dbReference type="NCBIfam" id="NF004477">
    <property type="entry name" value="PRK05815.1-1"/>
    <property type="match status" value="1"/>
</dbReference>
<dbReference type="PANTHER" id="PTHR42823">
    <property type="entry name" value="ATP SYNTHASE SUBUNIT A, CHLOROPLASTIC"/>
    <property type="match status" value="1"/>
</dbReference>
<dbReference type="PANTHER" id="PTHR42823:SF3">
    <property type="entry name" value="ATP SYNTHASE SUBUNIT A, CHLOROPLASTIC"/>
    <property type="match status" value="1"/>
</dbReference>
<dbReference type="Pfam" id="PF00119">
    <property type="entry name" value="ATP-synt_A"/>
    <property type="match status" value="1"/>
</dbReference>
<dbReference type="SUPFAM" id="SSF81336">
    <property type="entry name" value="F1F0 ATP synthase subunit A"/>
    <property type="match status" value="1"/>
</dbReference>
<dbReference type="PROSITE" id="PS00449">
    <property type="entry name" value="ATPASE_A"/>
    <property type="match status" value="1"/>
</dbReference>